<feature type="chain" id="PRO_0000444105" description="Membralin-like protein At1g60995">
    <location>
        <begin position="1"/>
        <end position="623"/>
    </location>
</feature>
<feature type="transmembrane region" description="Helical" evidence="1">
    <location>
        <begin position="24"/>
        <end position="44"/>
    </location>
</feature>
<feature type="transmembrane region" description="Helical" evidence="1">
    <location>
        <begin position="315"/>
        <end position="335"/>
    </location>
</feature>
<feature type="transmembrane region" description="Helical" evidence="1">
    <location>
        <begin position="363"/>
        <end position="383"/>
    </location>
</feature>
<feature type="transmembrane region" description="Helical" evidence="1">
    <location>
        <begin position="392"/>
        <end position="412"/>
    </location>
</feature>
<feature type="transmembrane region" description="Helical" evidence="1">
    <location>
        <begin position="424"/>
        <end position="444"/>
    </location>
</feature>
<feature type="region of interest" description="Disordered" evidence="2">
    <location>
        <begin position="99"/>
        <end position="119"/>
    </location>
</feature>
<feature type="region of interest" description="Disordered" evidence="2">
    <location>
        <begin position="506"/>
        <end position="567"/>
    </location>
</feature>
<feature type="region of interest" description="Disordered" evidence="2">
    <location>
        <begin position="602"/>
        <end position="623"/>
    </location>
</feature>
<feature type="compositionally biased region" description="Polar residues" evidence="2">
    <location>
        <begin position="514"/>
        <end position="531"/>
    </location>
</feature>
<protein>
    <recommendedName>
        <fullName evidence="3">Membralin-like protein At1g60995</fullName>
    </recommendedName>
</protein>
<evidence type="ECO:0000255" key="1"/>
<evidence type="ECO:0000256" key="2">
    <source>
        <dbReference type="SAM" id="MobiDB-lite"/>
    </source>
</evidence>
<evidence type="ECO:0000305" key="3"/>
<evidence type="ECO:0000312" key="4">
    <source>
        <dbReference type="Araport" id="AT1G60995"/>
    </source>
</evidence>
<evidence type="ECO:0000312" key="5">
    <source>
        <dbReference type="EMBL" id="AAG51636.1"/>
    </source>
</evidence>
<keyword id="KW-0472">Membrane</keyword>
<keyword id="KW-1185">Reference proteome</keyword>
<keyword id="KW-0812">Transmembrane</keyword>
<keyword id="KW-1133">Transmembrane helix</keyword>
<comment type="subcellular location">
    <subcellularLocation>
        <location evidence="1">Membrane</location>
        <topology evidence="1">Multi-pass membrane protein</topology>
    </subcellularLocation>
</comment>
<comment type="similarity">
    <text evidence="3">Belongs to the membralin family.</text>
</comment>
<comment type="sequence caution" evidence="3">
    <conflict type="erroneous gene model prediction">
        <sequence resource="EMBL-CDS" id="AAG51636"/>
    </conflict>
    <text>The predicted gene has been split into 2 genes: At1g60995 and At1g61000.</text>
</comment>
<sequence length="623" mass="71729">MDPEQTFIRVQERFSQILTPRIRGFLEYTYLFVAITLFCILVVMHANYVQQPGCSSELTGVELAEAELMQIKITSAGLWSRNDESTAADVPRVVAATDSLEVSKTDQESSTSEENTDDTFVKIDKEEPRSSFSVSAKENVRAAILRFLKKCYRRISFVLQHTARILRGVRKIWNIIGIPLNLDVPKLLHVLYMDKVNYYAVQWLESKTQEFEPTYLYTMEKGYFLLPDEAKSRHNIRTANVSISARHPCFGNRWQQLLINRVVGYDTIIMNSLQNSAGQGYLYNYQTREFYNLSYSQELPDGSAHFGDYLVTKCGVLMMSLFVFFTTTMSVSFTLRETQTRMLKFTVQLQHHAQHRLPTFQLIFVHVIESLVFVPIMIGILFFLFEFYDDQLLAFMVLVLVWLCELFTLISVRTPISMKFFPRFFLLYFLVFHIYFFSYAYGFSYLALMTTAAFMQHLILYFWNRFEVPALQRFLQSRQSHLQQHPDFHITSSTILASTLHITRLNRTTRNRTPSGPNHTTPNQNTETRSFTADGGGVGNPAQYQEQQEENEANTVPAEPNPQQAGAMSSFSSMLLWILGGASSEGLNSFLSMFRDVRDEDEAQVFADTSPPQNPHHDPLSVD</sequence>
<gene>
    <name evidence="4" type="ordered locus">At1g60995</name>
    <name evidence="5" type="ORF">T7P1.14</name>
</gene>
<organism>
    <name type="scientific">Arabidopsis thaliana</name>
    <name type="common">Mouse-ear cress</name>
    <dbReference type="NCBI Taxonomy" id="3702"/>
    <lineage>
        <taxon>Eukaryota</taxon>
        <taxon>Viridiplantae</taxon>
        <taxon>Streptophyta</taxon>
        <taxon>Embryophyta</taxon>
        <taxon>Tracheophyta</taxon>
        <taxon>Spermatophyta</taxon>
        <taxon>Magnoliopsida</taxon>
        <taxon>eudicotyledons</taxon>
        <taxon>Gunneridae</taxon>
        <taxon>Pentapetalae</taxon>
        <taxon>rosids</taxon>
        <taxon>malvids</taxon>
        <taxon>Brassicales</taxon>
        <taxon>Brassicaceae</taxon>
        <taxon>Camelineae</taxon>
        <taxon>Arabidopsis</taxon>
    </lineage>
</organism>
<name>MBRL_ARATH</name>
<dbReference type="EMBL" id="AC018908">
    <property type="protein sequence ID" value="AAG51636.1"/>
    <property type="status" value="ALT_SEQ"/>
    <property type="molecule type" value="Genomic_DNA"/>
</dbReference>
<dbReference type="EMBL" id="CP002684">
    <property type="protein sequence ID" value="AEE33764.1"/>
    <property type="molecule type" value="Genomic_DNA"/>
</dbReference>
<dbReference type="EMBL" id="AK118859">
    <property type="protein sequence ID" value="BAC43446.1"/>
    <property type="molecule type" value="mRNA"/>
</dbReference>
<dbReference type="RefSeq" id="NP_001077749.1">
    <property type="nucleotide sequence ID" value="NM_001084280.2"/>
</dbReference>
<dbReference type="FunCoup" id="Q8GWG6">
    <property type="interactions" value="1103"/>
</dbReference>
<dbReference type="STRING" id="3702.Q8GWG6"/>
<dbReference type="iPTMnet" id="Q8GWG6"/>
<dbReference type="PaxDb" id="3702-AT1G60995.1"/>
<dbReference type="ProteomicsDB" id="238696"/>
<dbReference type="EnsemblPlants" id="AT1G60995.1">
    <property type="protein sequence ID" value="AT1G60995.1"/>
    <property type="gene ID" value="AT1G60995"/>
</dbReference>
<dbReference type="GeneID" id="5007825"/>
<dbReference type="Gramene" id="AT1G60995.1">
    <property type="protein sequence ID" value="AT1G60995.1"/>
    <property type="gene ID" value="AT1G60995"/>
</dbReference>
<dbReference type="KEGG" id="ath:AT1G60995"/>
<dbReference type="Araport" id="AT1G60995"/>
<dbReference type="TAIR" id="AT1G60995">
    <property type="gene designation" value="HISE1"/>
</dbReference>
<dbReference type="eggNOG" id="KOG2092">
    <property type="taxonomic scope" value="Eukaryota"/>
</dbReference>
<dbReference type="eggNOG" id="KOG4438">
    <property type="taxonomic scope" value="Eukaryota"/>
</dbReference>
<dbReference type="HOGENOM" id="CLU_021947_0_0_1"/>
<dbReference type="InParanoid" id="Q8GWG6"/>
<dbReference type="OMA" id="WHRRLSF"/>
<dbReference type="OrthoDB" id="6779347at2759"/>
<dbReference type="PhylomeDB" id="Q8GWG6"/>
<dbReference type="PRO" id="PR:Q8GWG6"/>
<dbReference type="Proteomes" id="UP000006548">
    <property type="component" value="Chromosome 1"/>
</dbReference>
<dbReference type="ExpressionAtlas" id="Q8GWG6">
    <property type="expression patterns" value="baseline and differential"/>
</dbReference>
<dbReference type="GO" id="GO:0005783">
    <property type="term" value="C:endoplasmic reticulum"/>
    <property type="evidence" value="ECO:0000314"/>
    <property type="project" value="TAIR"/>
</dbReference>
<dbReference type="GO" id="GO:0016020">
    <property type="term" value="C:membrane"/>
    <property type="evidence" value="ECO:0007669"/>
    <property type="project" value="UniProtKB-SubCell"/>
</dbReference>
<dbReference type="GO" id="GO:0106118">
    <property type="term" value="P:regulation of sterol biosynthetic process"/>
    <property type="evidence" value="ECO:0000315"/>
    <property type="project" value="TAIR"/>
</dbReference>
<dbReference type="InterPro" id="IPR019144">
    <property type="entry name" value="Membralin"/>
</dbReference>
<dbReference type="PANTHER" id="PTHR21650:SF4">
    <property type="entry name" value="MEMBRALIN"/>
    <property type="match status" value="1"/>
</dbReference>
<dbReference type="PANTHER" id="PTHR21650">
    <property type="entry name" value="MEMBRALIN/KINETOCHORE PROTEIN NUF2"/>
    <property type="match status" value="1"/>
</dbReference>
<dbReference type="Pfam" id="PF09746">
    <property type="entry name" value="Membralin"/>
    <property type="match status" value="1"/>
</dbReference>
<reference key="1">
    <citation type="journal article" date="2000" name="Nature">
        <title>Sequence and analysis of chromosome 1 of the plant Arabidopsis thaliana.</title>
        <authorList>
            <person name="Theologis A."/>
            <person name="Ecker J.R."/>
            <person name="Palm C.J."/>
            <person name="Federspiel N.A."/>
            <person name="Kaul S."/>
            <person name="White O."/>
            <person name="Alonso J."/>
            <person name="Altafi H."/>
            <person name="Araujo R."/>
            <person name="Bowman C.L."/>
            <person name="Brooks S.Y."/>
            <person name="Buehler E."/>
            <person name="Chan A."/>
            <person name="Chao Q."/>
            <person name="Chen H."/>
            <person name="Cheuk R.F."/>
            <person name="Chin C.W."/>
            <person name="Chung M.K."/>
            <person name="Conn L."/>
            <person name="Conway A.B."/>
            <person name="Conway A.R."/>
            <person name="Creasy T.H."/>
            <person name="Dewar K."/>
            <person name="Dunn P."/>
            <person name="Etgu P."/>
            <person name="Feldblyum T.V."/>
            <person name="Feng J.-D."/>
            <person name="Fong B."/>
            <person name="Fujii C.Y."/>
            <person name="Gill J.E."/>
            <person name="Goldsmith A.D."/>
            <person name="Haas B."/>
            <person name="Hansen N.F."/>
            <person name="Hughes B."/>
            <person name="Huizar L."/>
            <person name="Hunter J.L."/>
            <person name="Jenkins J."/>
            <person name="Johnson-Hopson C."/>
            <person name="Khan S."/>
            <person name="Khaykin E."/>
            <person name="Kim C.J."/>
            <person name="Koo H.L."/>
            <person name="Kremenetskaia I."/>
            <person name="Kurtz D.B."/>
            <person name="Kwan A."/>
            <person name="Lam B."/>
            <person name="Langin-Hooper S."/>
            <person name="Lee A."/>
            <person name="Lee J.M."/>
            <person name="Lenz C.A."/>
            <person name="Li J.H."/>
            <person name="Li Y.-P."/>
            <person name="Lin X."/>
            <person name="Liu S.X."/>
            <person name="Liu Z.A."/>
            <person name="Luros J.S."/>
            <person name="Maiti R."/>
            <person name="Marziali A."/>
            <person name="Militscher J."/>
            <person name="Miranda M."/>
            <person name="Nguyen M."/>
            <person name="Nierman W.C."/>
            <person name="Osborne B.I."/>
            <person name="Pai G."/>
            <person name="Peterson J."/>
            <person name="Pham P.K."/>
            <person name="Rizzo M."/>
            <person name="Rooney T."/>
            <person name="Rowley D."/>
            <person name="Sakano H."/>
            <person name="Salzberg S.L."/>
            <person name="Schwartz J.R."/>
            <person name="Shinn P."/>
            <person name="Southwick A.M."/>
            <person name="Sun H."/>
            <person name="Tallon L.J."/>
            <person name="Tambunga G."/>
            <person name="Toriumi M.J."/>
            <person name="Town C.D."/>
            <person name="Utterback T."/>
            <person name="Van Aken S."/>
            <person name="Vaysberg M."/>
            <person name="Vysotskaia V.S."/>
            <person name="Walker M."/>
            <person name="Wu D."/>
            <person name="Yu G."/>
            <person name="Fraser C.M."/>
            <person name="Venter J.C."/>
            <person name="Davis R.W."/>
        </authorList>
    </citation>
    <scope>NUCLEOTIDE SEQUENCE [LARGE SCALE GENOMIC DNA]</scope>
    <source>
        <strain>cv. Columbia</strain>
    </source>
</reference>
<reference key="2">
    <citation type="journal article" date="2017" name="Plant J.">
        <title>Araport11: a complete reannotation of the Arabidopsis thaliana reference genome.</title>
        <authorList>
            <person name="Cheng C.Y."/>
            <person name="Krishnakumar V."/>
            <person name="Chan A.P."/>
            <person name="Thibaud-Nissen F."/>
            <person name="Schobel S."/>
            <person name="Town C.D."/>
        </authorList>
    </citation>
    <scope>GENOME REANNOTATION</scope>
    <source>
        <strain>cv. Columbia</strain>
    </source>
</reference>
<reference key="3">
    <citation type="journal article" date="2002" name="Science">
        <title>Functional annotation of a full-length Arabidopsis cDNA collection.</title>
        <authorList>
            <person name="Seki M."/>
            <person name="Narusaka M."/>
            <person name="Kamiya A."/>
            <person name="Ishida J."/>
            <person name="Satou M."/>
            <person name="Sakurai T."/>
            <person name="Nakajima M."/>
            <person name="Enju A."/>
            <person name="Akiyama K."/>
            <person name="Oono Y."/>
            <person name="Muramatsu M."/>
            <person name="Hayashizaki Y."/>
            <person name="Kawai J."/>
            <person name="Carninci P."/>
            <person name="Itoh M."/>
            <person name="Ishii Y."/>
            <person name="Arakawa T."/>
            <person name="Shibata K."/>
            <person name="Shinagawa A."/>
            <person name="Shinozaki K."/>
        </authorList>
    </citation>
    <scope>NUCLEOTIDE SEQUENCE [LARGE SCALE MRNA]</scope>
    <source>
        <strain>cv. Columbia</strain>
    </source>
</reference>
<accession>Q8GWG6</accession>
<accession>Q9C953</accession>
<proteinExistence type="evidence at transcript level"/>